<gene>
    <name evidence="17" type="primary">ADCYAP1</name>
</gene>
<comment type="function">
    <text evidence="1 2 5 12 13 14">PACAP is a neuropeptide involved in diverse array of physiological processes through activating the PACAP subfamily of class B1 G protein-coupled receptors: VIP receptor 1 (VIPR1), VIP receptor 2 (VIPR2), and PACAP type I receptor (ADCYAP1R1) (PubMed:11175907, PubMed:23800469, PubMed:32047270, PubMed:36385145). Exerts neuroprotective and general cytoprotective effects due to anti-apoptotic, anti-inflammatory, and antioxidant actions (PubMed:23800469). Promotes neuron projection development through the RAPGEF2/Rap1/B-Raf/ERK pathway (PubMed:23800469). In chromaffin cells, induces long-lasting increase of intracellular calcium concentrations and neuroendocrine secretion (By similarity). Involved in the control of glucose homeostasis, induces insulin secretion by pancreatic beta cells (By similarity). PACAP exists in two bioactive forms from proteolysis of the same precursor protein, PACAP27 and PACAP38, which differ by eleven amino acid residues in the C-terminus (PubMed:32047270).</text>
</comment>
<comment type="interaction">
    <interactant intactId="EBI-8588930">
        <id>P18509</id>
    </interactant>
    <interactant intactId="EBI-15635217">
        <id>P41586-3</id>
        <label>ADCYAP1R1</label>
    </interactant>
    <organismsDiffer>false</organismsDiffer>
    <experiments>2</experiments>
</comment>
<comment type="interaction">
    <interactant intactId="EBI-8588930">
        <id>P18509</id>
    </interactant>
    <interactant intactId="EBI-77613">
        <id>P05067</id>
        <label>APP</label>
    </interactant>
    <organismsDiffer>false</organismsDiffer>
    <experiments>3</experiments>
</comment>
<comment type="interaction">
    <interactant intactId="EBI-8588930">
        <id>P18509</id>
    </interactant>
    <interactant intactId="EBI-1104674">
        <id>P10909</id>
        <label>CLU</label>
    </interactant>
    <organismsDiffer>false</organismsDiffer>
    <experiments>4</experiments>
</comment>
<comment type="subcellular location">
    <subcellularLocation>
        <location>Secreted</location>
    </subcellularLocation>
</comment>
<comment type="similarity">
    <text evidence="16">Belongs to the glucagon family.</text>
</comment>
<sequence length="176" mass="18835">MTMCSGARLALLVYGIIMHSSVYSSPAAAGLRFPGIRPEEEAYGEDGNPLPDFDGSEPPGAGSPASAPRAAAAWYRPAGRRDVAHGILNEAYRKVLDQLSAGKHLQSLVARGVGGSLGGGAGDDAEPLSKRHSDGIFTDSYSRYRKQMAVKKYLAAVLGKRYKQRVKNKGRRIAYL</sequence>
<keyword id="KW-0002">3D-structure</keyword>
<keyword id="KW-0027">Amidation</keyword>
<keyword id="KW-0165">Cleavage on pair of basic residues</keyword>
<keyword id="KW-0372">Hormone</keyword>
<keyword id="KW-0524">Neurogenesis</keyword>
<keyword id="KW-1267">Proteomics identification</keyword>
<keyword id="KW-1185">Reference proteome</keyword>
<keyword id="KW-0964">Secreted</keyword>
<keyword id="KW-0732">Signal</keyword>
<protein>
    <recommendedName>
        <fullName evidence="15">Pituitary adenylate cyclase-activating polypeptide</fullName>
        <shortName evidence="15">PACAP</shortName>
    </recommendedName>
    <component>
        <recommendedName>
            <fullName>PACAP-related peptide</fullName>
        </recommendedName>
        <alternativeName>
            <fullName>PRP-48</fullName>
        </alternativeName>
    </component>
    <component>
        <recommendedName>
            <fullName evidence="15">Pituitary adenylate cyclase-activating polypeptide 27</fullName>
            <shortName>PACAP-27</shortName>
            <shortName evidence="15">PACAP27</shortName>
        </recommendedName>
    </component>
    <component>
        <recommendedName>
            <fullName evidence="15">Pituitary adenylate cyclase-activating polypeptide 38</fullName>
            <shortName>PACAP-38</shortName>
            <shortName evidence="15">PACAP38</shortName>
        </recommendedName>
    </component>
</protein>
<accession>P18509</accession>
<accession>B2R7N4</accession>
<accession>Q52LQ0</accession>
<name>PACA_HUMAN</name>
<evidence type="ECO:0000250" key="1">
    <source>
        <dbReference type="UniProtKB" id="O70176"/>
    </source>
</evidence>
<evidence type="ECO:0000250" key="2">
    <source>
        <dbReference type="UniProtKB" id="P13589"/>
    </source>
</evidence>
<evidence type="ECO:0000255" key="3"/>
<evidence type="ECO:0000256" key="4">
    <source>
        <dbReference type="SAM" id="MobiDB-lite"/>
    </source>
</evidence>
<evidence type="ECO:0000269" key="5">
    <source>
    </source>
</evidence>
<evidence type="ECO:0000269" key="6">
    <source>
    </source>
</evidence>
<evidence type="ECO:0000269" key="7">
    <source>
    </source>
</evidence>
<evidence type="ECO:0000269" key="8">
    <source>
    </source>
</evidence>
<evidence type="ECO:0000269" key="9">
    <source>
    </source>
</evidence>
<evidence type="ECO:0000269" key="10">
    <source>
    </source>
</evidence>
<evidence type="ECO:0000269" key="11">
    <source>
    </source>
</evidence>
<evidence type="ECO:0000269" key="12">
    <source>
    </source>
</evidence>
<evidence type="ECO:0000269" key="13">
    <source>
    </source>
</evidence>
<evidence type="ECO:0000269" key="14">
    <source>
    </source>
</evidence>
<evidence type="ECO:0000303" key="15">
    <source>
    </source>
</evidence>
<evidence type="ECO:0000305" key="16"/>
<evidence type="ECO:0000312" key="17">
    <source>
        <dbReference type="HGNC" id="HGNC:241"/>
    </source>
</evidence>
<evidence type="ECO:0007744" key="18">
    <source>
        <dbReference type="PDB" id="2JOD"/>
    </source>
</evidence>
<evidence type="ECO:0007744" key="19">
    <source>
        <dbReference type="PDB" id="6M1I"/>
    </source>
</evidence>
<evidence type="ECO:0007744" key="20">
    <source>
        <dbReference type="PDB" id="7VQX"/>
    </source>
</evidence>
<evidence type="ECO:0007744" key="21">
    <source>
        <dbReference type="PDB" id="7WBJ"/>
    </source>
</evidence>
<evidence type="ECO:0007744" key="22">
    <source>
        <dbReference type="PDB" id="8E3X"/>
    </source>
</evidence>
<evidence type="ECO:0007744" key="23">
    <source>
        <dbReference type="PDB" id="8E3Y"/>
    </source>
</evidence>
<evidence type="ECO:0007829" key="24">
    <source>
        <dbReference type="PDB" id="8E3X"/>
    </source>
</evidence>
<dbReference type="EMBL" id="S83513">
    <property type="protein sequence ID" value="AAB21470.1"/>
    <property type="molecule type" value="mRNA"/>
</dbReference>
<dbReference type="EMBL" id="X60435">
    <property type="protein sequence ID" value="CAA42962.1"/>
    <property type="molecule type" value="Genomic_DNA"/>
</dbReference>
<dbReference type="EMBL" id="AK313050">
    <property type="protein sequence ID" value="BAG35881.1"/>
    <property type="molecule type" value="mRNA"/>
</dbReference>
<dbReference type="EMBL" id="BC093837">
    <property type="protein sequence ID" value="AAH93837.1"/>
    <property type="molecule type" value="mRNA"/>
</dbReference>
<dbReference type="EMBL" id="BC101803">
    <property type="protein sequence ID" value="AAI01804.1"/>
    <property type="molecule type" value="mRNA"/>
</dbReference>
<dbReference type="CCDS" id="CCDS11825.1"/>
<dbReference type="PIR" id="I84638">
    <property type="entry name" value="I84638"/>
</dbReference>
<dbReference type="RefSeq" id="NP_001093203.1">
    <property type="nucleotide sequence ID" value="NM_001099733.2"/>
</dbReference>
<dbReference type="RefSeq" id="NP_001108.2">
    <property type="nucleotide sequence ID" value="NM_001117.5"/>
</dbReference>
<dbReference type="PDB" id="1GEA">
    <property type="method" value="NMR"/>
    <property type="chains" value="A=132-152"/>
</dbReference>
<dbReference type="PDB" id="2D2P">
    <property type="method" value="NMR"/>
    <property type="chains" value="A=132-169"/>
</dbReference>
<dbReference type="PDB" id="2JOD">
    <property type="method" value="NMR"/>
    <property type="chains" value="B=137-169"/>
</dbReference>
<dbReference type="PDB" id="6LPB">
    <property type="method" value="EM"/>
    <property type="resolution" value="3.90 A"/>
    <property type="chains" value="P=132-169"/>
</dbReference>
<dbReference type="PDB" id="6M1I">
    <property type="method" value="EM"/>
    <property type="resolution" value="3.50 A"/>
    <property type="chains" value="B=132-169"/>
</dbReference>
<dbReference type="PDB" id="6P9Y">
    <property type="method" value="EM"/>
    <property type="resolution" value="3.01 A"/>
    <property type="chains" value="P=132-169"/>
</dbReference>
<dbReference type="PDB" id="6VN7">
    <property type="method" value="EM"/>
    <property type="resolution" value="3.20 A"/>
    <property type="chains" value="L=132-158"/>
</dbReference>
<dbReference type="PDB" id="7VQX">
    <property type="method" value="EM"/>
    <property type="resolution" value="2.74 A"/>
    <property type="chains" value="L=132-158"/>
</dbReference>
<dbReference type="PDB" id="7WBJ">
    <property type="method" value="EM"/>
    <property type="resolution" value="3.42 A"/>
    <property type="chains" value="L=132-158"/>
</dbReference>
<dbReference type="PDB" id="8E3X">
    <property type="method" value="EM"/>
    <property type="resolution" value="2.30 A"/>
    <property type="chains" value="P=132-158"/>
</dbReference>
<dbReference type="PDB" id="8E3Y">
    <property type="method" value="EM"/>
    <property type="resolution" value="2.30 A"/>
    <property type="chains" value="P=132-158"/>
</dbReference>
<dbReference type="PDBsum" id="1GEA"/>
<dbReference type="PDBsum" id="2D2P"/>
<dbReference type="PDBsum" id="2JOD"/>
<dbReference type="PDBsum" id="6LPB"/>
<dbReference type="PDBsum" id="6M1I"/>
<dbReference type="PDBsum" id="6P9Y"/>
<dbReference type="PDBsum" id="6VN7"/>
<dbReference type="PDBsum" id="7VQX"/>
<dbReference type="PDBsum" id="7WBJ"/>
<dbReference type="PDBsum" id="8E3X"/>
<dbReference type="PDBsum" id="8E3Y"/>
<dbReference type="BMRB" id="P18509"/>
<dbReference type="EMDB" id="EMD-0940"/>
<dbReference type="EMDB" id="EMD-20278"/>
<dbReference type="EMDB" id="EMD-21249"/>
<dbReference type="EMDB" id="EMD-27872"/>
<dbReference type="EMDB" id="EMD-27873"/>
<dbReference type="EMDB" id="EMD-30048"/>
<dbReference type="EMDB" id="EMD-32095"/>
<dbReference type="EMDB" id="EMD-32401"/>
<dbReference type="SMR" id="P18509"/>
<dbReference type="BioGRID" id="106629">
    <property type="interactions" value="35"/>
</dbReference>
<dbReference type="DIP" id="DIP-60936N"/>
<dbReference type="FunCoup" id="P18509">
    <property type="interactions" value="593"/>
</dbReference>
<dbReference type="IntAct" id="P18509">
    <property type="interactions" value="25"/>
</dbReference>
<dbReference type="MINT" id="P18509"/>
<dbReference type="STRING" id="9606.ENSP00000462647"/>
<dbReference type="BindingDB" id="P18509"/>
<dbReference type="DrugBank" id="DB03988">
    <property type="generic name" value="2,6-Diamino-Hexanoic Acid Amide"/>
</dbReference>
<dbReference type="iPTMnet" id="P18509"/>
<dbReference type="PhosphoSitePlus" id="P18509"/>
<dbReference type="BioMuta" id="ADCYAP1"/>
<dbReference type="DMDM" id="71159615"/>
<dbReference type="MassIVE" id="P18509"/>
<dbReference type="PaxDb" id="9606-ENSP00000462647"/>
<dbReference type="PeptideAtlas" id="P18509"/>
<dbReference type="ProteomicsDB" id="53571"/>
<dbReference type="ABCD" id="P18509">
    <property type="antibodies" value="29 sequenced antibodies"/>
</dbReference>
<dbReference type="Antibodypedia" id="41707">
    <property type="antibodies" value="355 antibodies from 30 providers"/>
</dbReference>
<dbReference type="DNASU" id="116"/>
<dbReference type="Ensembl" id="ENST00000450565.8">
    <property type="protein sequence ID" value="ENSP00000411658.3"/>
    <property type="gene ID" value="ENSG00000141433.13"/>
</dbReference>
<dbReference type="Ensembl" id="ENST00000579794.1">
    <property type="protein sequence ID" value="ENSP00000462647.1"/>
    <property type="gene ID" value="ENSG00000141433.13"/>
</dbReference>
<dbReference type="GeneID" id="116"/>
<dbReference type="KEGG" id="hsa:116"/>
<dbReference type="MANE-Select" id="ENST00000450565.8">
    <property type="protein sequence ID" value="ENSP00000411658.3"/>
    <property type="RefSeq nucleotide sequence ID" value="NM_001099733.2"/>
    <property type="RefSeq protein sequence ID" value="NP_001093203.1"/>
</dbReference>
<dbReference type="UCSC" id="uc010dkg.4">
    <property type="organism name" value="human"/>
</dbReference>
<dbReference type="AGR" id="HGNC:241"/>
<dbReference type="CTD" id="116"/>
<dbReference type="DisGeNET" id="116"/>
<dbReference type="GeneCards" id="ADCYAP1"/>
<dbReference type="HGNC" id="HGNC:241">
    <property type="gene designation" value="ADCYAP1"/>
</dbReference>
<dbReference type="HPA" id="ENSG00000141433">
    <property type="expression patterns" value="Tissue enhanced (brain, lymphoid tissue)"/>
</dbReference>
<dbReference type="MIM" id="102980">
    <property type="type" value="gene"/>
</dbReference>
<dbReference type="neXtProt" id="NX_P18509"/>
<dbReference type="OpenTargets" id="ENSG00000141433"/>
<dbReference type="PharmGKB" id="PA24564"/>
<dbReference type="VEuPathDB" id="HostDB:ENSG00000141433"/>
<dbReference type="eggNOG" id="ENOG502QSGB">
    <property type="taxonomic scope" value="Eukaryota"/>
</dbReference>
<dbReference type="GeneTree" id="ENSGT00950000183154"/>
<dbReference type="HOGENOM" id="CLU_118633_0_0_1"/>
<dbReference type="InParanoid" id="P18509"/>
<dbReference type="OMA" id="GIIMHCN"/>
<dbReference type="OrthoDB" id="9875627at2759"/>
<dbReference type="PAN-GO" id="P18509">
    <property type="GO annotations" value="13 GO annotations based on evolutionary models"/>
</dbReference>
<dbReference type="PhylomeDB" id="P18509"/>
<dbReference type="TreeFam" id="TF332804"/>
<dbReference type="PathwayCommons" id="P18509"/>
<dbReference type="Reactome" id="R-HSA-187024">
    <property type="pathway name" value="NGF-independant TRKA activation"/>
</dbReference>
<dbReference type="Reactome" id="R-HSA-418555">
    <property type="pathway name" value="G alpha (s) signalling events"/>
</dbReference>
<dbReference type="Reactome" id="R-HSA-420092">
    <property type="pathway name" value="Glucagon-type ligand receptors"/>
</dbReference>
<dbReference type="SABIO-RK" id="P18509"/>
<dbReference type="SignaLink" id="P18509"/>
<dbReference type="SIGNOR" id="P18509"/>
<dbReference type="BioGRID-ORCS" id="116">
    <property type="hits" value="10 hits in 1141 CRISPR screens"/>
</dbReference>
<dbReference type="EvolutionaryTrace" id="P18509"/>
<dbReference type="GeneWiki" id="Pituitary_adenylate_cyclase-activating_peptide"/>
<dbReference type="GenomeRNAi" id="116"/>
<dbReference type="Pharos" id="P18509">
    <property type="development level" value="Tbio"/>
</dbReference>
<dbReference type="PRO" id="PR:P18509"/>
<dbReference type="Proteomes" id="UP000005640">
    <property type="component" value="Chromosome 18"/>
</dbReference>
<dbReference type="RNAct" id="P18509">
    <property type="molecule type" value="protein"/>
</dbReference>
<dbReference type="Bgee" id="ENSG00000141433">
    <property type="expression patterns" value="Expressed in type B pancreatic cell and 119 other cell types or tissues"/>
</dbReference>
<dbReference type="GO" id="GO:0005576">
    <property type="term" value="C:extracellular region"/>
    <property type="evidence" value="ECO:0000304"/>
    <property type="project" value="Reactome"/>
</dbReference>
<dbReference type="GO" id="GO:0005615">
    <property type="term" value="C:extracellular space"/>
    <property type="evidence" value="ECO:0000314"/>
    <property type="project" value="UniProt"/>
</dbReference>
<dbReference type="GO" id="GO:0043005">
    <property type="term" value="C:neuron projection"/>
    <property type="evidence" value="ECO:0000318"/>
    <property type="project" value="GO_Central"/>
</dbReference>
<dbReference type="GO" id="GO:0043204">
    <property type="term" value="C:perikaryon"/>
    <property type="evidence" value="ECO:0000318"/>
    <property type="project" value="GO_Central"/>
</dbReference>
<dbReference type="GO" id="GO:0005184">
    <property type="term" value="F:neuropeptide hormone activity"/>
    <property type="evidence" value="ECO:0000314"/>
    <property type="project" value="UniProtKB"/>
</dbReference>
<dbReference type="GO" id="GO:0051428">
    <property type="term" value="F:peptide hormone receptor binding"/>
    <property type="evidence" value="ECO:0000314"/>
    <property type="project" value="UniProtKB"/>
</dbReference>
<dbReference type="GO" id="GO:0016521">
    <property type="term" value="F:pituitary adenylate cyclase activating polypeptide activity"/>
    <property type="evidence" value="ECO:0000314"/>
    <property type="project" value="BHF-UCL"/>
</dbReference>
<dbReference type="GO" id="GO:0005102">
    <property type="term" value="F:signaling receptor binding"/>
    <property type="evidence" value="ECO:0000353"/>
    <property type="project" value="BHF-UCL"/>
</dbReference>
<dbReference type="GO" id="GO:0031891">
    <property type="term" value="F:type 1 vasoactive intestinal polypeptide receptor binding"/>
    <property type="evidence" value="ECO:0000314"/>
    <property type="project" value="UniProt"/>
</dbReference>
<dbReference type="GO" id="GO:0031892">
    <property type="term" value="F:type 2 vasoactive intestinal polypeptide receptor binding"/>
    <property type="evidence" value="ECO:0000315"/>
    <property type="project" value="UniProt"/>
</dbReference>
<dbReference type="GO" id="GO:0007190">
    <property type="term" value="P:activation of adenylate cyclase activity"/>
    <property type="evidence" value="ECO:0000304"/>
    <property type="project" value="ProtInc"/>
</dbReference>
<dbReference type="GO" id="GO:0007189">
    <property type="term" value="P:adenylate cyclase-activating G protein-coupled receptor signaling pathway"/>
    <property type="evidence" value="ECO:0000314"/>
    <property type="project" value="BHF-UCL"/>
</dbReference>
<dbReference type="GO" id="GO:0007188">
    <property type="term" value="P:adenylate cyclase-modulating G protein-coupled receptor signaling pathway"/>
    <property type="evidence" value="ECO:0000315"/>
    <property type="project" value="UniProtKB"/>
</dbReference>
<dbReference type="GO" id="GO:0007267">
    <property type="term" value="P:cell-cell signaling"/>
    <property type="evidence" value="ECO:0000304"/>
    <property type="project" value="ProtInc"/>
</dbReference>
<dbReference type="GO" id="GO:0007565">
    <property type="term" value="P:female pregnancy"/>
    <property type="evidence" value="ECO:0000304"/>
    <property type="project" value="ProtInc"/>
</dbReference>
<dbReference type="GO" id="GO:0030073">
    <property type="term" value="P:insulin secretion"/>
    <property type="evidence" value="ECO:0000250"/>
    <property type="project" value="UniProtKB"/>
</dbReference>
<dbReference type="GO" id="GO:0045786">
    <property type="term" value="P:negative regulation of cell cycle"/>
    <property type="evidence" value="ECO:0007669"/>
    <property type="project" value="Ensembl"/>
</dbReference>
<dbReference type="GO" id="GO:0031175">
    <property type="term" value="P:neuron projection development"/>
    <property type="evidence" value="ECO:0000314"/>
    <property type="project" value="UniProtKB"/>
</dbReference>
<dbReference type="GO" id="GO:0007218">
    <property type="term" value="P:neuropeptide signaling pathway"/>
    <property type="evidence" value="ECO:0000314"/>
    <property type="project" value="UniProtKB"/>
</dbReference>
<dbReference type="GO" id="GO:0071651">
    <property type="term" value="P:positive regulation of chemokine (C-C motif) ligand 5 production"/>
    <property type="evidence" value="ECO:0000314"/>
    <property type="project" value="CACAO"/>
</dbReference>
<dbReference type="GO" id="GO:0120162">
    <property type="term" value="P:positive regulation of cold-induced thermogenesis"/>
    <property type="evidence" value="ECO:0000250"/>
    <property type="project" value="YuBioLab"/>
</dbReference>
<dbReference type="GO" id="GO:0007204">
    <property type="term" value="P:positive regulation of cytosolic calcium ion concentration"/>
    <property type="evidence" value="ECO:0000250"/>
    <property type="project" value="UniProtKB"/>
</dbReference>
<dbReference type="GO" id="GO:0070374">
    <property type="term" value="P:positive regulation of ERK1 and ERK2 cascade"/>
    <property type="evidence" value="ECO:0000314"/>
    <property type="project" value="UniProtKB"/>
</dbReference>
<dbReference type="GO" id="GO:0060124">
    <property type="term" value="P:positive regulation of growth hormone secretion"/>
    <property type="evidence" value="ECO:0000250"/>
    <property type="project" value="UniProtKB"/>
</dbReference>
<dbReference type="GO" id="GO:0043547">
    <property type="term" value="P:positive regulation of GTPase activity"/>
    <property type="evidence" value="ECO:0000314"/>
    <property type="project" value="UniProtKB"/>
</dbReference>
<dbReference type="GO" id="GO:0045860">
    <property type="term" value="P:positive regulation of protein kinase activity"/>
    <property type="evidence" value="ECO:0000314"/>
    <property type="project" value="UniProtKB"/>
</dbReference>
<dbReference type="GO" id="GO:0045944">
    <property type="term" value="P:positive regulation of transcription by RNA polymerase II"/>
    <property type="evidence" value="ECO:0000314"/>
    <property type="project" value="UniProtKB"/>
</dbReference>
<dbReference type="GO" id="GO:0008277">
    <property type="term" value="P:regulation of G protein-coupled receptor signaling pathway"/>
    <property type="evidence" value="ECO:0000314"/>
    <property type="project" value="UniProtKB"/>
</dbReference>
<dbReference type="GO" id="GO:0032880">
    <property type="term" value="P:regulation of protein localization"/>
    <property type="evidence" value="ECO:0000314"/>
    <property type="project" value="BHF-UCL"/>
</dbReference>
<dbReference type="Gene3D" id="6.10.250.590">
    <property type="match status" value="1"/>
</dbReference>
<dbReference type="InterPro" id="IPR000532">
    <property type="entry name" value="Glucagon_GIP_secretin_VIP"/>
</dbReference>
<dbReference type="InterPro" id="IPR046963">
    <property type="entry name" value="VIP/GHRH-like"/>
</dbReference>
<dbReference type="PANTHER" id="PTHR11213">
    <property type="entry name" value="GLUCAGON-FAMILY NEUROPEPTIDE"/>
    <property type="match status" value="1"/>
</dbReference>
<dbReference type="PANTHER" id="PTHR11213:SF1">
    <property type="entry name" value="PITUITARY ADENYLATE CYCLASE-ACTIVATING POLYPEPTIDE"/>
    <property type="match status" value="1"/>
</dbReference>
<dbReference type="Pfam" id="PF00123">
    <property type="entry name" value="Hormone_2"/>
    <property type="match status" value="2"/>
</dbReference>
<dbReference type="PRINTS" id="PR00275">
    <property type="entry name" value="GLUCAGON"/>
</dbReference>
<dbReference type="SMART" id="SM00070">
    <property type="entry name" value="GLUCA"/>
    <property type="match status" value="2"/>
</dbReference>
<dbReference type="PROSITE" id="PS00260">
    <property type="entry name" value="GLUCAGON"/>
    <property type="match status" value="1"/>
</dbReference>
<organism>
    <name type="scientific">Homo sapiens</name>
    <name type="common">Human</name>
    <dbReference type="NCBI Taxonomy" id="9606"/>
    <lineage>
        <taxon>Eukaryota</taxon>
        <taxon>Metazoa</taxon>
        <taxon>Chordata</taxon>
        <taxon>Craniata</taxon>
        <taxon>Vertebrata</taxon>
        <taxon>Euteleostomi</taxon>
        <taxon>Mammalia</taxon>
        <taxon>Eutheria</taxon>
        <taxon>Euarchontoglires</taxon>
        <taxon>Primates</taxon>
        <taxon>Haplorrhini</taxon>
        <taxon>Catarrhini</taxon>
        <taxon>Hominidae</taxon>
        <taxon>Homo</taxon>
    </lineage>
</organism>
<reference key="1">
    <citation type="journal article" date="1992" name="DNA Cell Biol.">
        <title>Primary structure and characterization of the precursor to human pituitary adenylate cyclase activating polypeptide.</title>
        <authorList>
            <person name="Ohkubo S."/>
            <person name="Kimura C."/>
            <person name="Ogi K."/>
            <person name="Okazaki K."/>
            <person name="Hosoya M."/>
            <person name="Onda H."/>
            <person name="Miyata A."/>
            <person name="Arimura A."/>
            <person name="Fujino M."/>
        </authorList>
    </citation>
    <scope>NUCLEOTIDE SEQUENCE [MRNA]</scope>
    <scope>VARIANT GLY-54</scope>
    <source>
        <tissue>Testis</tissue>
    </source>
</reference>
<reference key="2">
    <citation type="journal article" date="1992" name="Biochim. Biophys. Acta">
        <title>Structure of the human pituitary adenylate cyclase activating polypeptide (PACAP) gene.</title>
        <authorList>
            <person name="Hosoya M."/>
            <person name="Kimura C."/>
            <person name="Ogi K."/>
            <person name="Ohkubo S."/>
            <person name="Miyamoto Y."/>
            <person name="Kugoh H."/>
            <person name="Shimizu M."/>
            <person name="Onda H."/>
            <person name="Oshimura M."/>
            <person name="Arimura A."/>
            <person name="Fujino M."/>
        </authorList>
    </citation>
    <scope>NUCLEOTIDE SEQUENCE [GENOMIC DNA]</scope>
    <scope>VARIANT GLY-54</scope>
</reference>
<reference key="3">
    <citation type="journal article" date="2004" name="Nat. Genet.">
        <title>Complete sequencing and characterization of 21,243 full-length human cDNAs.</title>
        <authorList>
            <person name="Ota T."/>
            <person name="Suzuki Y."/>
            <person name="Nishikawa T."/>
            <person name="Otsuki T."/>
            <person name="Sugiyama T."/>
            <person name="Irie R."/>
            <person name="Wakamatsu A."/>
            <person name="Hayashi K."/>
            <person name="Sato H."/>
            <person name="Nagai K."/>
            <person name="Kimura K."/>
            <person name="Makita H."/>
            <person name="Sekine M."/>
            <person name="Obayashi M."/>
            <person name="Nishi T."/>
            <person name="Shibahara T."/>
            <person name="Tanaka T."/>
            <person name="Ishii S."/>
            <person name="Yamamoto J."/>
            <person name="Saito K."/>
            <person name="Kawai Y."/>
            <person name="Isono Y."/>
            <person name="Nakamura Y."/>
            <person name="Nagahari K."/>
            <person name="Murakami K."/>
            <person name="Yasuda T."/>
            <person name="Iwayanagi T."/>
            <person name="Wagatsuma M."/>
            <person name="Shiratori A."/>
            <person name="Sudo H."/>
            <person name="Hosoiri T."/>
            <person name="Kaku Y."/>
            <person name="Kodaira H."/>
            <person name="Kondo H."/>
            <person name="Sugawara M."/>
            <person name="Takahashi M."/>
            <person name="Kanda K."/>
            <person name="Yokoi T."/>
            <person name="Furuya T."/>
            <person name="Kikkawa E."/>
            <person name="Omura Y."/>
            <person name="Abe K."/>
            <person name="Kamihara K."/>
            <person name="Katsuta N."/>
            <person name="Sato K."/>
            <person name="Tanikawa M."/>
            <person name="Yamazaki M."/>
            <person name="Ninomiya K."/>
            <person name="Ishibashi T."/>
            <person name="Yamashita H."/>
            <person name="Murakawa K."/>
            <person name="Fujimori K."/>
            <person name="Tanai H."/>
            <person name="Kimata M."/>
            <person name="Watanabe M."/>
            <person name="Hiraoka S."/>
            <person name="Chiba Y."/>
            <person name="Ishida S."/>
            <person name="Ono Y."/>
            <person name="Takiguchi S."/>
            <person name="Watanabe S."/>
            <person name="Yosida M."/>
            <person name="Hotuta T."/>
            <person name="Kusano J."/>
            <person name="Kanehori K."/>
            <person name="Takahashi-Fujii A."/>
            <person name="Hara H."/>
            <person name="Tanase T.-O."/>
            <person name="Nomura Y."/>
            <person name="Togiya S."/>
            <person name="Komai F."/>
            <person name="Hara R."/>
            <person name="Takeuchi K."/>
            <person name="Arita M."/>
            <person name="Imose N."/>
            <person name="Musashino K."/>
            <person name="Yuuki H."/>
            <person name="Oshima A."/>
            <person name="Sasaki N."/>
            <person name="Aotsuka S."/>
            <person name="Yoshikawa Y."/>
            <person name="Matsunawa H."/>
            <person name="Ichihara T."/>
            <person name="Shiohata N."/>
            <person name="Sano S."/>
            <person name="Moriya S."/>
            <person name="Momiyama H."/>
            <person name="Satoh N."/>
            <person name="Takami S."/>
            <person name="Terashima Y."/>
            <person name="Suzuki O."/>
            <person name="Nakagawa S."/>
            <person name="Senoh A."/>
            <person name="Mizoguchi H."/>
            <person name="Goto Y."/>
            <person name="Shimizu F."/>
            <person name="Wakebe H."/>
            <person name="Hishigaki H."/>
            <person name="Watanabe T."/>
            <person name="Sugiyama A."/>
            <person name="Takemoto M."/>
            <person name="Kawakami B."/>
            <person name="Yamazaki M."/>
            <person name="Watanabe K."/>
            <person name="Kumagai A."/>
            <person name="Itakura S."/>
            <person name="Fukuzumi Y."/>
            <person name="Fujimori Y."/>
            <person name="Komiyama M."/>
            <person name="Tashiro H."/>
            <person name="Tanigami A."/>
            <person name="Fujiwara T."/>
            <person name="Ono T."/>
            <person name="Yamada K."/>
            <person name="Fujii Y."/>
            <person name="Ozaki K."/>
            <person name="Hirao M."/>
            <person name="Ohmori Y."/>
            <person name="Kawabata A."/>
            <person name="Hikiji T."/>
            <person name="Kobatake N."/>
            <person name="Inagaki H."/>
            <person name="Ikema Y."/>
            <person name="Okamoto S."/>
            <person name="Okitani R."/>
            <person name="Kawakami T."/>
            <person name="Noguchi S."/>
            <person name="Itoh T."/>
            <person name="Shigeta K."/>
            <person name="Senba T."/>
            <person name="Matsumura K."/>
            <person name="Nakajima Y."/>
            <person name="Mizuno T."/>
            <person name="Morinaga M."/>
            <person name="Sasaki M."/>
            <person name="Togashi T."/>
            <person name="Oyama M."/>
            <person name="Hata H."/>
            <person name="Watanabe M."/>
            <person name="Komatsu T."/>
            <person name="Mizushima-Sugano J."/>
            <person name="Satoh T."/>
            <person name="Shirai Y."/>
            <person name="Takahashi Y."/>
            <person name="Nakagawa K."/>
            <person name="Okumura K."/>
            <person name="Nagase T."/>
            <person name="Nomura N."/>
            <person name="Kikuchi H."/>
            <person name="Masuho Y."/>
            <person name="Yamashita R."/>
            <person name="Nakai K."/>
            <person name="Yada T."/>
            <person name="Nakamura Y."/>
            <person name="Ohara O."/>
            <person name="Isogai T."/>
            <person name="Sugano S."/>
        </authorList>
    </citation>
    <scope>NUCLEOTIDE SEQUENCE [LARGE SCALE MRNA]</scope>
    <scope>VARIANT GLY-54</scope>
    <source>
        <tissue>Brain</tissue>
    </source>
</reference>
<reference key="4">
    <citation type="journal article" date="2004" name="Genome Res.">
        <title>The status, quality, and expansion of the NIH full-length cDNA project: the Mammalian Gene Collection (MGC).</title>
        <authorList>
            <consortium name="The MGC Project Team"/>
        </authorList>
    </citation>
    <scope>NUCLEOTIDE SEQUENCE [LARGE SCALE MRNA]</scope>
    <source>
        <tissue>Brain</tissue>
    </source>
</reference>
<reference key="5">
    <citation type="journal article" date="1990" name="Biochem. Biophys. Res. Commun.">
        <title>A novel peptide which stimulates adenylate cyclase: molecular cloning and characterization of the ovine and human cDNAs.</title>
        <authorList>
            <person name="Kimura C."/>
            <person name="Ohkubo S."/>
            <person name="Ogi K."/>
            <person name="Hosoya M."/>
            <person name="Itoh Y."/>
            <person name="Onda H."/>
            <person name="Miyata A."/>
            <person name="Jiang L."/>
            <person name="Dahl R.R."/>
            <person name="Stibbs H.H."/>
            <person name="Arimura A."/>
            <person name="Fujino M."/>
        </authorList>
    </citation>
    <scope>NUCLEOTIDE SEQUENCE [MRNA] OF 114-176</scope>
    <scope>AMIDATION AT LEU-158 AND LYS-169</scope>
</reference>
<reference key="6">
    <citation type="journal article" date="2013" name="Sci. Signal.">
        <title>Rapgef2 Connects GPCR-Mediated cAMP Signals to ERK Activation in Neuronal and Endocrine Cells.</title>
        <authorList>
            <person name="Emery A.C."/>
            <person name="Eiden M.V."/>
            <person name="Mustafa T."/>
            <person name="Eiden L.E."/>
        </authorList>
    </citation>
    <scope>FUNCTION</scope>
</reference>
<reference key="7">
    <citation type="journal article" date="1993" name="Biochemistry">
        <title>Solution structure of pituitary adenylate cyclase activating polypeptide by nuclear magnetic resonance spectroscopy.</title>
        <authorList>
            <person name="Wray V."/>
            <person name="Kakoschke C."/>
            <person name="Nokihara K."/>
            <person name="Naruse S."/>
        </authorList>
    </citation>
    <scope>STRUCTURE BY NMR OF 132-169</scope>
</reference>
<reference key="8">
    <citation type="journal article" date="1992" name="Int. J. Pept. Protein Res.">
        <title>Pituitary adenylate cyclase activating polypeptide (PACAP) with 27 residues. Conformation determined by 1H NMR and CD spectroscopies and distance geometry in 25% methanol solution.</title>
        <authorList>
            <person name="Inooka H."/>
            <person name="Endo S."/>
            <person name="Kitada C."/>
            <person name="Mizuta E."/>
            <person name="Fujino M."/>
        </authorList>
    </citation>
    <scope>STRUCTURE BY NMR OF 132-158</scope>
</reference>
<reference key="9">
    <citation type="journal article" date="2001" name="Nat. Struct. Biol.">
        <title>Conformation of a peptide ligand bound to its G-protein coupled receptor.</title>
        <authorList>
            <person name="Inooka H."/>
            <person name="Ohtaki T."/>
            <person name="Kitahara O."/>
            <person name="Ikegami T."/>
            <person name="Endo S."/>
            <person name="Kitada C."/>
            <person name="Ogi K."/>
            <person name="Onda H."/>
            <person name="Fujino M."/>
            <person name="Shirakawa M."/>
        </authorList>
    </citation>
    <scope>STRUCTURE BY NMR OF 132-152</scope>
    <scope>FUNCTION</scope>
</reference>
<reference evidence="18" key="10">
    <citation type="journal article" date="2007" name="Proc. Natl. Acad. Sci. U.S.A.">
        <title>Solution structure and mutational analysis of pituitary adenylate cyclase-activating polypeptide binding to the extracellular domain of PAC1-RS.</title>
        <authorList>
            <person name="Sun C."/>
            <person name="Song D."/>
            <person name="Davis-Taber R.A."/>
            <person name="Barrett L.W."/>
            <person name="Scott V.E."/>
            <person name="Richardson P.L."/>
            <person name="Pereda-Lopez A."/>
            <person name="Uchic M.E."/>
            <person name="Solomon L.R."/>
            <person name="Lake M.R."/>
            <person name="Walter K.A."/>
            <person name="Hajduk P.J."/>
            <person name="Olejniczak E.T."/>
        </authorList>
    </citation>
    <scope>STRUCTURE BY NMR OF 137-169 IN COMPLEX WITH ADCYAP1R1</scope>
    <scope>MUTAGENESIS OF VAL-150; LYS-151; LYS-152; TYR-153; VAL-157 AND LEU-158</scope>
</reference>
<reference evidence="19" key="11">
    <citation type="journal article" date="2020" name="Cell Res.">
        <title>Cryo-EM structures of PAC1 receptor reveal ligand binding mechanism.</title>
        <authorList>
            <person name="Wang J."/>
            <person name="Song X."/>
            <person name="Zhang D."/>
            <person name="Chen X."/>
            <person name="Li X."/>
            <person name="Sun Y."/>
            <person name="Li C."/>
            <person name="Song Y."/>
            <person name="Ding Y."/>
            <person name="Ren R."/>
            <person name="Harrington E.H."/>
            <person name="Hu L.A."/>
            <person name="Zhong W."/>
            <person name="Xu C."/>
            <person name="Huang X."/>
            <person name="Wang H.W."/>
            <person name="Ma Y."/>
        </authorList>
    </citation>
    <scope>STRUCTURE BY ELECTRON MICROSCOPY (3.5 ANGSTROMS) OF 132-169 IN COMPLEX WITH MUTANT LEU-163; LEU-167; LEU-169; LEU-170; ALA-276; LEU-278 AND PHE-280 ADCYAP1R1</scope>
    <scope>FUNCTION</scope>
</reference>
<reference evidence="22 23" key="12">
    <citation type="journal article" date="2022" name="Nat. Commun.">
        <title>Understanding VPAC receptor family peptide binding and selectivity.</title>
        <authorList>
            <person name="Piper S.J."/>
            <person name="Deganutti G."/>
            <person name="Lu J."/>
            <person name="Zhao P."/>
            <person name="Liang Y.L."/>
            <person name="Lu Y."/>
            <person name="Fletcher M.M."/>
            <person name="Hossain M.A."/>
            <person name="Christopoulos A."/>
            <person name="Reynolds C.A."/>
            <person name="Danev R."/>
            <person name="Sexton P.M."/>
            <person name="Wootten D."/>
        </authorList>
    </citation>
    <scope>STRUCTURE BY ELECTRON MICROSCOPY (2.3 ANGSTROMS) OF 132-158 IN COMPLEX WITH ADCYAP1R1; VIPR1 AND G PROTEINS</scope>
    <scope>FUNCTION</scope>
</reference>
<reference evidence="20 21" key="13">
    <citation type="journal article" date="2022" name="Nat. Commun.">
        <title>A distinctive ligand recognition mechanism by the human vasoactive intestinal polypeptide receptor 2.</title>
        <authorList>
            <person name="Xu Y."/>
            <person name="Feng W."/>
            <person name="Zhou Q."/>
            <person name="Liang A."/>
            <person name="Li J."/>
            <person name="Dai A."/>
            <person name="Zhao F."/>
            <person name="Yan J."/>
            <person name="Chen C.W."/>
            <person name="Li H."/>
            <person name="Zhao L.H."/>
            <person name="Xia T."/>
            <person name="Jiang Y."/>
            <person name="Xu H.E."/>
            <person name="Yang D."/>
            <person name="Wang M.W."/>
        </authorList>
    </citation>
    <scope>STRUCTURE BY ELECTRON MICROSCOPY (2.74 ANGSTROMS) OF 132-158 IN COMPLEX WITH VIPR2 AND G PROTEINS</scope>
    <scope>FUNCTION</scope>
</reference>
<reference key="14">
    <citation type="journal article" date="2002" name="Hum. Mutat.">
        <title>Genetic variation screening and association studies of the adenylate cyclase activating polypeptide 1 (ADCYAP1) gene in patients with type 2 diabetes.</title>
        <authorList>
            <person name="Gu H.F."/>
        </authorList>
    </citation>
    <scope>VARIANT GLY-54</scope>
</reference>
<feature type="signal peptide" evidence="3">
    <location>
        <begin position="1"/>
        <end position="24"/>
    </location>
</feature>
<feature type="propeptide" id="PRO_0000011486">
    <location>
        <begin position="25"/>
        <end position="79"/>
    </location>
</feature>
<feature type="peptide" id="PRO_0000011487" description="PACAP-related peptide">
    <location>
        <begin position="82"/>
        <end position="129"/>
    </location>
</feature>
<feature type="peptide" id="PRO_0000011488" description="Pituitary adenylate cyclase-activating polypeptide 38">
    <location>
        <begin position="132"/>
        <end position="169"/>
    </location>
</feature>
<feature type="peptide" id="PRO_0000011489" description="Pituitary adenylate cyclase-activating polypeptide 27">
    <location>
        <begin position="132"/>
        <end position="158"/>
    </location>
</feature>
<feature type="propeptide" id="PRO_0000011490">
    <location>
        <begin position="173"/>
        <end position="176"/>
    </location>
</feature>
<feature type="region of interest" description="Disordered" evidence="4">
    <location>
        <begin position="39"/>
        <end position="68"/>
    </location>
</feature>
<feature type="region of interest" description="Important for receptor binding" evidence="10">
    <location>
        <begin position="150"/>
        <end position="158"/>
    </location>
</feature>
<feature type="compositionally biased region" description="Low complexity" evidence="4">
    <location>
        <begin position="56"/>
        <end position="68"/>
    </location>
</feature>
<feature type="modified residue" description="Leucine amide" evidence="11">
    <location>
        <position position="158"/>
    </location>
</feature>
<feature type="modified residue" description="Lysine amide" evidence="11">
    <location>
        <position position="169"/>
    </location>
</feature>
<feature type="sequence variant" id="VAR_014597" description="In dbSNP:rs2856966." evidence="6 7 8 9">
    <original>D</original>
    <variation>G</variation>
    <location>
        <position position="54"/>
    </location>
</feature>
<feature type="mutagenesis site" description="Strongly reduced affinity for ADCYAP1R1." evidence="10">
    <original>V</original>
    <variation>G</variation>
    <location>
        <position position="150"/>
    </location>
</feature>
<feature type="mutagenesis site" description="Strongly reduced affinity for ADCYAP1R1." evidence="10">
    <original>K</original>
    <variation>E</variation>
    <location>
        <position position="151"/>
    </location>
</feature>
<feature type="mutagenesis site" description="Strongly reduced affinity for ADCYAP1R1." evidence="10">
    <original>K</original>
    <variation>E</variation>
    <location>
        <position position="152"/>
    </location>
</feature>
<feature type="mutagenesis site" description="Strongly reduced affinity for ADCYAP1R1." evidence="10">
    <original>Y</original>
    <variation>A</variation>
    <location>
        <position position="153"/>
    </location>
</feature>
<feature type="mutagenesis site" description="Strongly reduced affinity for ADCYAP1R1." evidence="10">
    <original>V</original>
    <variation>A</variation>
    <location>
        <position position="157"/>
    </location>
</feature>
<feature type="mutagenesis site" description="Strongly reduced affinity for ADCYAP1R1." evidence="10">
    <original>L</original>
    <variation>A</variation>
    <location>
        <position position="158"/>
    </location>
</feature>
<feature type="helix" evidence="24">
    <location>
        <begin position="133"/>
        <end position="157"/>
    </location>
</feature>
<proteinExistence type="evidence at protein level"/>